<gene>
    <name evidence="1" type="primary">tsf</name>
    <name type="ordered locus">BURPS1710b_2582</name>
</gene>
<sequence>MAAITASMVAELRAKTDAPMMECKKALTEADGDMAKAEELLRVKLGNKASKAASRVTAEGVVASFVGANAGALVELNCETDFVAKNDDFNAFAKTVAELVATQNPADVAALSALPLDGKTVDEVRLALVGKIGENISIRRFVRFETSNKLATYLHGSRIGVIVEYTGAQEQVGKDVAMHVAAMKPVSLSADEVPADLIEKERRVAEQKAAESGKPAEIVAKMVDGSVQKFLKEVSLLNQPFVKNDKQTIEQMLKAADAAVQKFALFVVGEGIEKRQDDFAAEVAAQVAAAKQQ</sequence>
<evidence type="ECO:0000255" key="1">
    <source>
        <dbReference type="HAMAP-Rule" id="MF_00050"/>
    </source>
</evidence>
<keyword id="KW-0963">Cytoplasm</keyword>
<keyword id="KW-0251">Elongation factor</keyword>
<keyword id="KW-0648">Protein biosynthesis</keyword>
<accession>Q3JR29</accession>
<feature type="chain" id="PRO_0000241467" description="Elongation factor Ts">
    <location>
        <begin position="1"/>
        <end position="293"/>
    </location>
</feature>
<feature type="region of interest" description="Involved in Mg(2+) ion dislocation from EF-Tu" evidence="1">
    <location>
        <begin position="80"/>
        <end position="83"/>
    </location>
</feature>
<comment type="function">
    <text evidence="1">Associates with the EF-Tu.GDP complex and induces the exchange of GDP to GTP. It remains bound to the aminoacyl-tRNA.EF-Tu.GTP complex up to the GTP hydrolysis stage on the ribosome.</text>
</comment>
<comment type="subcellular location">
    <subcellularLocation>
        <location evidence="1">Cytoplasm</location>
    </subcellularLocation>
</comment>
<comment type="similarity">
    <text evidence="1">Belongs to the EF-Ts family.</text>
</comment>
<protein>
    <recommendedName>
        <fullName evidence="1">Elongation factor Ts</fullName>
        <shortName evidence="1">EF-Ts</shortName>
    </recommendedName>
</protein>
<name>EFTS_BURP1</name>
<dbReference type="EMBL" id="CP000124">
    <property type="protein sequence ID" value="ABA50515.1"/>
    <property type="molecule type" value="Genomic_DNA"/>
</dbReference>
<dbReference type="RefSeq" id="WP_004197087.1">
    <property type="nucleotide sequence ID" value="NC_007434.1"/>
</dbReference>
<dbReference type="SMR" id="Q3JR29"/>
<dbReference type="EnsemblBacteria" id="ABA50515">
    <property type="protein sequence ID" value="ABA50515"/>
    <property type="gene ID" value="BURPS1710b_2582"/>
</dbReference>
<dbReference type="GeneID" id="93060699"/>
<dbReference type="KEGG" id="bpm:BURPS1710b_2582"/>
<dbReference type="HOGENOM" id="CLU_047155_0_2_4"/>
<dbReference type="Proteomes" id="UP000002700">
    <property type="component" value="Chromosome I"/>
</dbReference>
<dbReference type="GO" id="GO:0005737">
    <property type="term" value="C:cytoplasm"/>
    <property type="evidence" value="ECO:0007669"/>
    <property type="project" value="UniProtKB-SubCell"/>
</dbReference>
<dbReference type="GO" id="GO:0003746">
    <property type="term" value="F:translation elongation factor activity"/>
    <property type="evidence" value="ECO:0007669"/>
    <property type="project" value="UniProtKB-UniRule"/>
</dbReference>
<dbReference type="CDD" id="cd14275">
    <property type="entry name" value="UBA_EF-Ts"/>
    <property type="match status" value="1"/>
</dbReference>
<dbReference type="FunFam" id="1.10.286.20:FF:000001">
    <property type="entry name" value="Elongation factor Ts"/>
    <property type="match status" value="1"/>
</dbReference>
<dbReference type="FunFam" id="1.10.8.10:FF:000001">
    <property type="entry name" value="Elongation factor Ts"/>
    <property type="match status" value="1"/>
</dbReference>
<dbReference type="Gene3D" id="1.10.286.20">
    <property type="match status" value="1"/>
</dbReference>
<dbReference type="Gene3D" id="1.10.8.10">
    <property type="entry name" value="DNA helicase RuvA subunit, C-terminal domain"/>
    <property type="match status" value="1"/>
</dbReference>
<dbReference type="Gene3D" id="3.30.479.20">
    <property type="entry name" value="Elongation factor Ts, dimerisation domain"/>
    <property type="match status" value="2"/>
</dbReference>
<dbReference type="HAMAP" id="MF_00050">
    <property type="entry name" value="EF_Ts"/>
    <property type="match status" value="1"/>
</dbReference>
<dbReference type="InterPro" id="IPR036402">
    <property type="entry name" value="EF-Ts_dimer_sf"/>
</dbReference>
<dbReference type="InterPro" id="IPR001816">
    <property type="entry name" value="Transl_elong_EFTs/EF1B"/>
</dbReference>
<dbReference type="InterPro" id="IPR014039">
    <property type="entry name" value="Transl_elong_EFTs/EF1B_dimer"/>
</dbReference>
<dbReference type="InterPro" id="IPR018101">
    <property type="entry name" value="Transl_elong_Ts_CS"/>
</dbReference>
<dbReference type="InterPro" id="IPR009060">
    <property type="entry name" value="UBA-like_sf"/>
</dbReference>
<dbReference type="NCBIfam" id="TIGR00116">
    <property type="entry name" value="tsf"/>
    <property type="match status" value="1"/>
</dbReference>
<dbReference type="PANTHER" id="PTHR11741">
    <property type="entry name" value="ELONGATION FACTOR TS"/>
    <property type="match status" value="1"/>
</dbReference>
<dbReference type="PANTHER" id="PTHR11741:SF0">
    <property type="entry name" value="ELONGATION FACTOR TS, MITOCHONDRIAL"/>
    <property type="match status" value="1"/>
</dbReference>
<dbReference type="Pfam" id="PF00889">
    <property type="entry name" value="EF_TS"/>
    <property type="match status" value="1"/>
</dbReference>
<dbReference type="SUPFAM" id="SSF54713">
    <property type="entry name" value="Elongation factor Ts (EF-Ts), dimerisation domain"/>
    <property type="match status" value="2"/>
</dbReference>
<dbReference type="SUPFAM" id="SSF46934">
    <property type="entry name" value="UBA-like"/>
    <property type="match status" value="1"/>
</dbReference>
<dbReference type="PROSITE" id="PS01127">
    <property type="entry name" value="EF_TS_2"/>
    <property type="match status" value="1"/>
</dbReference>
<proteinExistence type="inferred from homology"/>
<organism>
    <name type="scientific">Burkholderia pseudomallei (strain 1710b)</name>
    <dbReference type="NCBI Taxonomy" id="320372"/>
    <lineage>
        <taxon>Bacteria</taxon>
        <taxon>Pseudomonadati</taxon>
        <taxon>Pseudomonadota</taxon>
        <taxon>Betaproteobacteria</taxon>
        <taxon>Burkholderiales</taxon>
        <taxon>Burkholderiaceae</taxon>
        <taxon>Burkholderia</taxon>
        <taxon>pseudomallei group</taxon>
    </lineage>
</organism>
<reference key="1">
    <citation type="journal article" date="2010" name="Genome Biol. Evol.">
        <title>Continuing evolution of Burkholderia mallei through genome reduction and large-scale rearrangements.</title>
        <authorList>
            <person name="Losada L."/>
            <person name="Ronning C.M."/>
            <person name="DeShazer D."/>
            <person name="Woods D."/>
            <person name="Fedorova N."/>
            <person name="Kim H.S."/>
            <person name="Shabalina S.A."/>
            <person name="Pearson T.R."/>
            <person name="Brinkac L."/>
            <person name="Tan P."/>
            <person name="Nandi T."/>
            <person name="Crabtree J."/>
            <person name="Badger J."/>
            <person name="Beckstrom-Sternberg S."/>
            <person name="Saqib M."/>
            <person name="Schutzer S.E."/>
            <person name="Keim P."/>
            <person name="Nierman W.C."/>
        </authorList>
    </citation>
    <scope>NUCLEOTIDE SEQUENCE [LARGE SCALE GENOMIC DNA]</scope>
    <source>
        <strain>1710b</strain>
    </source>
</reference>